<comment type="function">
    <text evidence="1">This protein binds specifically to 23S rRNA.</text>
</comment>
<comment type="function">
    <text evidence="1">The globular domain of the protein is located near the polypeptide exit tunnel on the outside of the subunit, while an extended beta-hairpin is found that lines the wall of the exit tunnel in the center of the 70S ribosome.</text>
</comment>
<comment type="subunit">
    <text evidence="1">Part of the 50S ribosomal subunit.</text>
</comment>
<comment type="subcellular location">
    <subcellularLocation>
        <location>Plastid</location>
        <location>Chloroplast</location>
    </subcellularLocation>
</comment>
<comment type="similarity">
    <text evidence="2">Belongs to the universal ribosomal protein uL22 family.</text>
</comment>
<keyword id="KW-0150">Chloroplast</keyword>
<keyword id="KW-0934">Plastid</keyword>
<keyword id="KW-0687">Ribonucleoprotein</keyword>
<keyword id="KW-0689">Ribosomal protein</keyword>
<keyword id="KW-0694">RNA-binding</keyword>
<keyword id="KW-0699">rRNA-binding</keyword>
<geneLocation type="chloroplast"/>
<proteinExistence type="inferred from homology"/>
<evidence type="ECO:0000250" key="1"/>
<evidence type="ECO:0000305" key="2"/>
<organism>
    <name type="scientific">Piper cenocladum</name>
    <name type="common">Ant piper</name>
    <dbReference type="NCBI Taxonomy" id="398741"/>
    <lineage>
        <taxon>Eukaryota</taxon>
        <taxon>Viridiplantae</taxon>
        <taxon>Streptophyta</taxon>
        <taxon>Embryophyta</taxon>
        <taxon>Tracheophyta</taxon>
        <taxon>Spermatophyta</taxon>
        <taxon>Magnoliopsida</taxon>
        <taxon>Magnoliidae</taxon>
        <taxon>Piperales</taxon>
        <taxon>Piperaceae</taxon>
        <taxon>Piper</taxon>
    </lineage>
</organism>
<sequence>MSSWRKAKKSEQKHRLKRIARTRVQAFARDVRISAHKARRVIDQIRGRSYVETLTLLELMPYRASYPIFKLLYSAAASASHNLGFKEADSYISKAEVNEGAVLKRLKPRARGRSYLIKKPTCHITIVLKDRTLNEMSTPTSLS</sequence>
<name>RK22_PIPCE</name>
<feature type="chain" id="PRO_0000276448" description="Large ribosomal subunit protein uL22c">
    <location>
        <begin position="1"/>
        <end position="143"/>
    </location>
</feature>
<gene>
    <name type="primary">rpl22</name>
</gene>
<protein>
    <recommendedName>
        <fullName evidence="2">Large ribosomal subunit protein uL22c</fullName>
    </recommendedName>
    <alternativeName>
        <fullName>50S ribosomal protein L22, chloroplastic</fullName>
    </alternativeName>
</protein>
<accession>Q06GM0</accession>
<reference key="1">
    <citation type="journal article" date="2006" name="BMC Evol. Biol.">
        <title>Complete plastid genome sequences of Drimys, Liriodendron, and Piper: implications for the phylogenetic relationships of magnoliids.</title>
        <authorList>
            <person name="Cai Z."/>
            <person name="Penaflor C."/>
            <person name="Kuehl J.V."/>
            <person name="Leebens-Mack J."/>
            <person name="Carlson J.E."/>
            <person name="dePamphilis C.W."/>
            <person name="Boore J.L."/>
            <person name="Jansen R.K."/>
        </authorList>
    </citation>
    <scope>NUCLEOTIDE SEQUENCE [LARGE SCALE GENOMIC DNA]</scope>
</reference>
<dbReference type="EMBL" id="DQ887677">
    <property type="protein sequence ID" value="ABI14511.1"/>
    <property type="molecule type" value="Genomic_DNA"/>
</dbReference>
<dbReference type="RefSeq" id="YP_784513.1">
    <property type="nucleotide sequence ID" value="NC_008457.1"/>
</dbReference>
<dbReference type="SMR" id="Q06GM0"/>
<dbReference type="GeneID" id="4363658"/>
<dbReference type="GO" id="GO:0009507">
    <property type="term" value="C:chloroplast"/>
    <property type="evidence" value="ECO:0007669"/>
    <property type="project" value="UniProtKB-SubCell"/>
</dbReference>
<dbReference type="GO" id="GO:0015934">
    <property type="term" value="C:large ribosomal subunit"/>
    <property type="evidence" value="ECO:0007669"/>
    <property type="project" value="InterPro"/>
</dbReference>
<dbReference type="GO" id="GO:0019843">
    <property type="term" value="F:rRNA binding"/>
    <property type="evidence" value="ECO:0007669"/>
    <property type="project" value="UniProtKB-UniRule"/>
</dbReference>
<dbReference type="GO" id="GO:0003735">
    <property type="term" value="F:structural constituent of ribosome"/>
    <property type="evidence" value="ECO:0007669"/>
    <property type="project" value="InterPro"/>
</dbReference>
<dbReference type="GO" id="GO:0006412">
    <property type="term" value="P:translation"/>
    <property type="evidence" value="ECO:0007669"/>
    <property type="project" value="UniProtKB-UniRule"/>
</dbReference>
<dbReference type="CDD" id="cd00336">
    <property type="entry name" value="Ribosomal_L22"/>
    <property type="match status" value="1"/>
</dbReference>
<dbReference type="Gene3D" id="3.90.470.10">
    <property type="entry name" value="Ribosomal protein L22/L17"/>
    <property type="match status" value="1"/>
</dbReference>
<dbReference type="HAMAP" id="MF_01331_B">
    <property type="entry name" value="Ribosomal_uL22_B"/>
    <property type="match status" value="1"/>
</dbReference>
<dbReference type="InterPro" id="IPR001063">
    <property type="entry name" value="Ribosomal_uL22"/>
</dbReference>
<dbReference type="InterPro" id="IPR005727">
    <property type="entry name" value="Ribosomal_uL22_bac/chlpt-type"/>
</dbReference>
<dbReference type="InterPro" id="IPR047867">
    <property type="entry name" value="Ribosomal_uL22_bac/org-type"/>
</dbReference>
<dbReference type="InterPro" id="IPR018260">
    <property type="entry name" value="Ribosomal_uL22_CS"/>
</dbReference>
<dbReference type="InterPro" id="IPR036394">
    <property type="entry name" value="Ribosomal_uL22_sf"/>
</dbReference>
<dbReference type="NCBIfam" id="TIGR01044">
    <property type="entry name" value="rplV_bact"/>
    <property type="match status" value="1"/>
</dbReference>
<dbReference type="PANTHER" id="PTHR13501">
    <property type="entry name" value="CHLOROPLAST 50S RIBOSOMAL PROTEIN L22-RELATED"/>
    <property type="match status" value="1"/>
</dbReference>
<dbReference type="PANTHER" id="PTHR13501:SF10">
    <property type="entry name" value="LARGE RIBOSOMAL SUBUNIT PROTEIN UL22M"/>
    <property type="match status" value="1"/>
</dbReference>
<dbReference type="Pfam" id="PF00237">
    <property type="entry name" value="Ribosomal_L22"/>
    <property type="match status" value="1"/>
</dbReference>
<dbReference type="SUPFAM" id="SSF54843">
    <property type="entry name" value="Ribosomal protein L22"/>
    <property type="match status" value="1"/>
</dbReference>
<dbReference type="PROSITE" id="PS00464">
    <property type="entry name" value="RIBOSOMAL_L22"/>
    <property type="match status" value="1"/>
</dbReference>